<evidence type="ECO:0000250" key="1">
    <source>
        <dbReference type="UniProtKB" id="P82617"/>
    </source>
</evidence>
<evidence type="ECO:0000255" key="2"/>
<evidence type="ECO:0000269" key="3">
    <source>
    </source>
</evidence>
<evidence type="ECO:0000303" key="4">
    <source>
    </source>
</evidence>
<evidence type="ECO:0000305" key="5"/>
<evidence type="ECO:0000305" key="6">
    <source>
    </source>
</evidence>
<comment type="function">
    <text evidence="1">Myoactive.</text>
</comment>
<comment type="subcellular location">
    <subcellularLocation>
        <location evidence="6">Secreted</location>
    </subcellularLocation>
</comment>
<comment type="similarity">
    <text evidence="2">Belongs to the pyrokinin family.</text>
</comment>
<feature type="peptide" id="PRO_0000421612" description="CAPA-Pyrokinin" evidence="3">
    <location>
        <begin position="1"/>
        <end position="15"/>
    </location>
</feature>
<feature type="modified residue" description="Leucine amide" evidence="3">
    <location>
        <position position="15"/>
    </location>
</feature>
<dbReference type="GO" id="GO:0005576">
    <property type="term" value="C:extracellular region"/>
    <property type="evidence" value="ECO:0007669"/>
    <property type="project" value="UniProtKB-SubCell"/>
</dbReference>
<dbReference type="GO" id="GO:0005184">
    <property type="term" value="F:neuropeptide hormone activity"/>
    <property type="evidence" value="ECO:0007669"/>
    <property type="project" value="InterPro"/>
</dbReference>
<dbReference type="GO" id="GO:0007218">
    <property type="term" value="P:neuropeptide signaling pathway"/>
    <property type="evidence" value="ECO:0007669"/>
    <property type="project" value="UniProtKB-KW"/>
</dbReference>
<dbReference type="InterPro" id="IPR001484">
    <property type="entry name" value="Pyrokinin_CS"/>
</dbReference>
<dbReference type="PROSITE" id="PS00539">
    <property type="entry name" value="PYROKININ"/>
    <property type="match status" value="1"/>
</dbReference>
<reference evidence="5" key="1">
    <citation type="journal article" date="2012" name="Syst. Biol.">
        <title>Peptidomics-based phylogeny and biogeography of Mantophasmatodea (Hexapoda).</title>
        <authorList>
            <person name="Predel R."/>
            <person name="Neupert S."/>
            <person name="Huetteroth W."/>
            <person name="Kahnt J."/>
            <person name="Waidelich D."/>
            <person name="Roth S."/>
        </authorList>
    </citation>
    <scope>PROTEIN SEQUENCE</scope>
    <scope>AMIDATION AT LEU-15</scope>
    <source>
        <tissue evidence="3">Abdominal perisympathetic organs</tissue>
    </source>
</reference>
<organism>
    <name type="scientific">Tyrannophasma gladiator</name>
    <name type="common">Gladiator</name>
    <name type="synonym">Heel-walker</name>
    <dbReference type="NCBI Taxonomy" id="270861"/>
    <lineage>
        <taxon>Eukaryota</taxon>
        <taxon>Metazoa</taxon>
        <taxon>Ecdysozoa</taxon>
        <taxon>Arthropoda</taxon>
        <taxon>Hexapoda</taxon>
        <taxon>Insecta</taxon>
        <taxon>Pterygota</taxon>
        <taxon>Neoptera</taxon>
        <taxon>Polyneoptera</taxon>
        <taxon>Mantophasmatodea</taxon>
        <taxon>Mantophasmatodea incertae sedis</taxon>
        <taxon>Tyrannophasma</taxon>
    </lineage>
</organism>
<protein>
    <recommendedName>
        <fullName evidence="4">CAPA-Pyrokinin</fullName>
        <shortName evidence="4">CAPA-PK</shortName>
    </recommendedName>
    <alternativeName>
        <fullName evidence="1">FXPRL-amide</fullName>
    </alternativeName>
</protein>
<keyword id="KW-0027">Amidation</keyword>
<keyword id="KW-0903">Direct protein sequencing</keyword>
<keyword id="KW-0527">Neuropeptide</keyword>
<keyword id="KW-0964">Secreted</keyword>
<accession>B3A0H4</accession>
<sequence length="15" mass="1495">SGGGEGSGMWFGPRL</sequence>
<name>PPK5_TYRGL</name>
<proteinExistence type="evidence at protein level"/>